<feature type="chain" id="PRO_0000072503" description="Protein TfpB">
    <location>
        <begin position="1"/>
        <end position="261"/>
    </location>
</feature>
<name>TFPB_MORBO</name>
<organism>
    <name type="scientific">Moraxella bovis</name>
    <dbReference type="NCBI Taxonomy" id="476"/>
    <lineage>
        <taxon>Bacteria</taxon>
        <taxon>Pseudomonadati</taxon>
        <taxon>Pseudomonadota</taxon>
        <taxon>Gammaproteobacteria</taxon>
        <taxon>Moraxellales</taxon>
        <taxon>Moraxellaceae</taxon>
        <taxon>Moraxella</taxon>
    </lineage>
</organism>
<reference key="1">
    <citation type="journal article" date="1990" name="J. Bacteriol.">
        <title>Sequence analysis of the inversion region containing the pilin genes of Moraxella bovis.</title>
        <authorList>
            <person name="Fulks K.A."/>
            <person name="Marrs C.F."/>
            <person name="Stevens S.P."/>
            <person name="Green M.R."/>
        </authorList>
    </citation>
    <scope>NUCLEOTIDE SEQUENCE [GENOMIC DNA]</scope>
    <source>
        <strain>EPP63</strain>
    </source>
</reference>
<reference key="2">
    <citation type="journal article" date="1991" name="J. Bacteriol.">
        <title>Interesting sequence differences between the pilin gene inversion regions of Moraxella lacunata ATCC 17956 and Moraxella bovis Epp63.</title>
        <authorList>
            <person name="Rozsa F.W."/>
            <person name="Marrs C.F."/>
        </authorList>
    </citation>
    <scope>NUCLEOTIDE SEQUENCE [GENOMIC DNA]</scope>
</reference>
<gene>
    <name type="primary">tfpB</name>
</gene>
<proteinExistence type="predicted"/>
<dbReference type="EMBL" id="M32345">
    <property type="protein sequence ID" value="AAA88224.1"/>
    <property type="molecule type" value="Genomic_DNA"/>
</dbReference>
<dbReference type="EMBL" id="M59712">
    <property type="protein sequence ID" value="AAA25307.1"/>
    <property type="molecule type" value="Genomic_DNA"/>
</dbReference>
<dbReference type="RefSeq" id="WP_112741867.1">
    <property type="nucleotide sequence ID" value="NZ_CP030241.1"/>
</dbReference>
<dbReference type="SMR" id="P20666"/>
<dbReference type="KEGG" id="mboi:DQF64_03165"/>
<protein>
    <recommendedName>
        <fullName>Protein TfpB</fullName>
    </recommendedName>
</protein>
<sequence>MLNNFNKFVASSVSMVYLAVLSWATAYAYGWGQAAYHGYPWWHVVQGGSMIARSLAYVCVVSMVFVIGYLIGYQAFKFIKRFFGLLHVSWGASHLGFVKIFILLVIVSTPIMLLLYFYVGILSSYRLMGCVLSILAISLVCHKFGRAISFSIRLRELMSNEKYYQIFMAFIFVYVVVSAFSIGYLRSAFFTGYDIIEVENRPYYILVANGDEEFILGENIKHNSHFIFFNRKTLNHYTIHITPSPYLPYKNQLSAQIYHQE</sequence>
<accession>P20666</accession>